<feature type="chain" id="PRO_1000057858" description="Tryptophan synthase alpha chain">
    <location>
        <begin position="1"/>
        <end position="268"/>
    </location>
</feature>
<feature type="active site" description="Proton acceptor" evidence="1">
    <location>
        <position position="49"/>
    </location>
</feature>
<feature type="active site" description="Proton acceptor" evidence="1">
    <location>
        <position position="60"/>
    </location>
</feature>
<reference key="1">
    <citation type="journal article" date="2007" name="PLoS Genet.">
        <title>The complete genome sequence of Yersinia pseudotuberculosis IP31758, the causative agent of Far East scarlet-like fever.</title>
        <authorList>
            <person name="Eppinger M."/>
            <person name="Rosovitz M.J."/>
            <person name="Fricke W.F."/>
            <person name="Rasko D.A."/>
            <person name="Kokorina G."/>
            <person name="Fayolle C."/>
            <person name="Lindler L.E."/>
            <person name="Carniel E."/>
            <person name="Ravel J."/>
        </authorList>
    </citation>
    <scope>NUCLEOTIDE SEQUENCE [LARGE SCALE GENOMIC DNA]</scope>
    <source>
        <strain>IP 31758</strain>
    </source>
</reference>
<sequence>MERYQQLFKQLAAKKEGAFVPFVQLGDPSPAMSLNIIDTLIAAGADALELGIPFSDPLADGPTIQNAALRAFAAGVTPAICFEILAEIRQKHPTIPIGLLMYANLVFHNGIDHFYQRCAEVGVDSVLIADVPFEESAPFRAAALRHGIAPIFICPPNADDDLLREIASHGRGYTYLLSRAGVTGAENHGQLPLNHLVDKLREYNAAPALQGFGISEPAQVKASLAAGAAGAISGSAIVKIIEKNVAQPVEMLVQLTRFVTEMKAATRS</sequence>
<proteinExistence type="inferred from homology"/>
<protein>
    <recommendedName>
        <fullName evidence="1">Tryptophan synthase alpha chain</fullName>
        <ecNumber evidence="1">4.2.1.20</ecNumber>
    </recommendedName>
</protein>
<keyword id="KW-0028">Amino-acid biosynthesis</keyword>
<keyword id="KW-0057">Aromatic amino acid biosynthesis</keyword>
<keyword id="KW-0456">Lyase</keyword>
<keyword id="KW-0822">Tryptophan biosynthesis</keyword>
<gene>
    <name evidence="1" type="primary">trpA</name>
    <name type="ordered locus">YpsIP31758_1937</name>
</gene>
<comment type="function">
    <text evidence="1">The alpha subunit is responsible for the aldol cleavage of indoleglycerol phosphate to indole and glyceraldehyde 3-phosphate.</text>
</comment>
<comment type="catalytic activity">
    <reaction evidence="1">
        <text>(1S,2R)-1-C-(indol-3-yl)glycerol 3-phosphate + L-serine = D-glyceraldehyde 3-phosphate + L-tryptophan + H2O</text>
        <dbReference type="Rhea" id="RHEA:10532"/>
        <dbReference type="ChEBI" id="CHEBI:15377"/>
        <dbReference type="ChEBI" id="CHEBI:33384"/>
        <dbReference type="ChEBI" id="CHEBI:57912"/>
        <dbReference type="ChEBI" id="CHEBI:58866"/>
        <dbReference type="ChEBI" id="CHEBI:59776"/>
        <dbReference type="EC" id="4.2.1.20"/>
    </reaction>
</comment>
<comment type="pathway">
    <text evidence="1">Amino-acid biosynthesis; L-tryptophan biosynthesis; L-tryptophan from chorismate: step 5/5.</text>
</comment>
<comment type="subunit">
    <text evidence="1">Tetramer of two alpha and two beta chains.</text>
</comment>
<comment type="similarity">
    <text evidence="1">Belongs to the TrpA family.</text>
</comment>
<evidence type="ECO:0000255" key="1">
    <source>
        <dbReference type="HAMAP-Rule" id="MF_00131"/>
    </source>
</evidence>
<dbReference type="EC" id="4.2.1.20" evidence="1"/>
<dbReference type="EMBL" id="CP000720">
    <property type="protein sequence ID" value="ABS46456.1"/>
    <property type="molecule type" value="Genomic_DNA"/>
</dbReference>
<dbReference type="RefSeq" id="WP_011192442.1">
    <property type="nucleotide sequence ID" value="NC_009708.1"/>
</dbReference>
<dbReference type="SMR" id="A7FI34"/>
<dbReference type="KEGG" id="ypi:YpsIP31758_1937"/>
<dbReference type="HOGENOM" id="CLU_016734_0_4_6"/>
<dbReference type="UniPathway" id="UPA00035">
    <property type="reaction ID" value="UER00044"/>
</dbReference>
<dbReference type="Proteomes" id="UP000002412">
    <property type="component" value="Chromosome"/>
</dbReference>
<dbReference type="GO" id="GO:0005829">
    <property type="term" value="C:cytosol"/>
    <property type="evidence" value="ECO:0007669"/>
    <property type="project" value="TreeGrafter"/>
</dbReference>
<dbReference type="GO" id="GO:0004834">
    <property type="term" value="F:tryptophan synthase activity"/>
    <property type="evidence" value="ECO:0007669"/>
    <property type="project" value="UniProtKB-UniRule"/>
</dbReference>
<dbReference type="CDD" id="cd04724">
    <property type="entry name" value="Tryptophan_synthase_alpha"/>
    <property type="match status" value="1"/>
</dbReference>
<dbReference type="FunFam" id="3.20.20.70:FF:000037">
    <property type="entry name" value="Tryptophan synthase alpha chain"/>
    <property type="match status" value="1"/>
</dbReference>
<dbReference type="Gene3D" id="3.20.20.70">
    <property type="entry name" value="Aldolase class I"/>
    <property type="match status" value="1"/>
</dbReference>
<dbReference type="HAMAP" id="MF_00131">
    <property type="entry name" value="Trp_synth_alpha"/>
    <property type="match status" value="1"/>
</dbReference>
<dbReference type="InterPro" id="IPR013785">
    <property type="entry name" value="Aldolase_TIM"/>
</dbReference>
<dbReference type="InterPro" id="IPR011060">
    <property type="entry name" value="RibuloseP-bd_barrel"/>
</dbReference>
<dbReference type="InterPro" id="IPR018204">
    <property type="entry name" value="Trp_synthase_alpha_AS"/>
</dbReference>
<dbReference type="InterPro" id="IPR002028">
    <property type="entry name" value="Trp_synthase_suA"/>
</dbReference>
<dbReference type="NCBIfam" id="TIGR00262">
    <property type="entry name" value="trpA"/>
    <property type="match status" value="1"/>
</dbReference>
<dbReference type="PANTHER" id="PTHR43406:SF1">
    <property type="entry name" value="TRYPTOPHAN SYNTHASE ALPHA CHAIN, CHLOROPLASTIC"/>
    <property type="match status" value="1"/>
</dbReference>
<dbReference type="PANTHER" id="PTHR43406">
    <property type="entry name" value="TRYPTOPHAN SYNTHASE, ALPHA CHAIN"/>
    <property type="match status" value="1"/>
</dbReference>
<dbReference type="Pfam" id="PF00290">
    <property type="entry name" value="Trp_syntA"/>
    <property type="match status" value="1"/>
</dbReference>
<dbReference type="SUPFAM" id="SSF51366">
    <property type="entry name" value="Ribulose-phoshate binding barrel"/>
    <property type="match status" value="1"/>
</dbReference>
<dbReference type="PROSITE" id="PS00167">
    <property type="entry name" value="TRP_SYNTHASE_ALPHA"/>
    <property type="match status" value="1"/>
</dbReference>
<accession>A7FI34</accession>
<organism>
    <name type="scientific">Yersinia pseudotuberculosis serotype O:1b (strain IP 31758)</name>
    <dbReference type="NCBI Taxonomy" id="349747"/>
    <lineage>
        <taxon>Bacteria</taxon>
        <taxon>Pseudomonadati</taxon>
        <taxon>Pseudomonadota</taxon>
        <taxon>Gammaproteobacteria</taxon>
        <taxon>Enterobacterales</taxon>
        <taxon>Yersiniaceae</taxon>
        <taxon>Yersinia</taxon>
    </lineage>
</organism>
<name>TRPA_YERP3</name>